<keyword id="KW-0150">Chloroplast</keyword>
<keyword id="KW-0472">Membrane</keyword>
<keyword id="KW-0520">NAD</keyword>
<keyword id="KW-0521">NADP</keyword>
<keyword id="KW-0934">Plastid</keyword>
<keyword id="KW-0618">Plastoquinone</keyword>
<keyword id="KW-0874">Quinone</keyword>
<keyword id="KW-0793">Thylakoid</keyword>
<keyword id="KW-1278">Translocase</keyword>
<keyword id="KW-0812">Transmembrane</keyword>
<keyword id="KW-1133">Transmembrane helix</keyword>
<keyword id="KW-0813">Transport</keyword>
<protein>
    <recommendedName>
        <fullName evidence="1">NAD(P)H-quinone oxidoreductase subunit 3, chloroplastic</fullName>
        <ecNumber evidence="1">7.1.1.-</ecNumber>
    </recommendedName>
    <alternativeName>
        <fullName evidence="1">NAD(P)H dehydrogenase subunit 3</fullName>
    </alternativeName>
    <alternativeName>
        <fullName evidence="1">NADH-plastoquinone oxidoreductase subunit 3</fullName>
    </alternativeName>
</protein>
<dbReference type="EC" id="7.1.1.-" evidence="1"/>
<dbReference type="EMBL" id="AP009368">
    <property type="protein sequence ID" value="BAF49944.1"/>
    <property type="molecule type" value="Genomic_DNA"/>
</dbReference>
<dbReference type="RefSeq" id="YP_001123120.1">
    <property type="nucleotide sequence ID" value="NC_009267.1"/>
</dbReference>
<dbReference type="SMR" id="A4QJT8"/>
<dbReference type="GeneID" id="4962381"/>
<dbReference type="GO" id="GO:0009535">
    <property type="term" value="C:chloroplast thylakoid membrane"/>
    <property type="evidence" value="ECO:0007669"/>
    <property type="project" value="UniProtKB-SubCell"/>
</dbReference>
<dbReference type="GO" id="GO:0030964">
    <property type="term" value="C:NADH dehydrogenase complex"/>
    <property type="evidence" value="ECO:0007669"/>
    <property type="project" value="TreeGrafter"/>
</dbReference>
<dbReference type="GO" id="GO:0008137">
    <property type="term" value="F:NADH dehydrogenase (ubiquinone) activity"/>
    <property type="evidence" value="ECO:0007669"/>
    <property type="project" value="InterPro"/>
</dbReference>
<dbReference type="GO" id="GO:0048038">
    <property type="term" value="F:quinone binding"/>
    <property type="evidence" value="ECO:0007669"/>
    <property type="project" value="UniProtKB-KW"/>
</dbReference>
<dbReference type="GO" id="GO:0019684">
    <property type="term" value="P:photosynthesis, light reaction"/>
    <property type="evidence" value="ECO:0007669"/>
    <property type="project" value="UniProtKB-UniRule"/>
</dbReference>
<dbReference type="FunFam" id="1.20.58.1610:FF:000001">
    <property type="entry name" value="NAD(P)H-quinone oxidoreductase subunit 3, chloroplastic"/>
    <property type="match status" value="1"/>
</dbReference>
<dbReference type="Gene3D" id="1.20.58.1610">
    <property type="entry name" value="NADH:ubiquinone/plastoquinone oxidoreductase, chain 3"/>
    <property type="match status" value="1"/>
</dbReference>
<dbReference type="HAMAP" id="MF_01394">
    <property type="entry name" value="NDH1_NuoA"/>
    <property type="match status" value="1"/>
</dbReference>
<dbReference type="InterPro" id="IPR023043">
    <property type="entry name" value="NAD(P)H_OxRDtase_bac/plastid"/>
</dbReference>
<dbReference type="InterPro" id="IPR000440">
    <property type="entry name" value="NADH_UbQ/plastoQ_OxRdtase_su3"/>
</dbReference>
<dbReference type="InterPro" id="IPR038430">
    <property type="entry name" value="NDAH_ubi_oxred_su3_sf"/>
</dbReference>
<dbReference type="PANTHER" id="PTHR11058">
    <property type="entry name" value="NADH-UBIQUINONE OXIDOREDUCTASE CHAIN 3"/>
    <property type="match status" value="1"/>
</dbReference>
<dbReference type="PANTHER" id="PTHR11058:SF9">
    <property type="entry name" value="NADH-UBIQUINONE OXIDOREDUCTASE CHAIN 3"/>
    <property type="match status" value="1"/>
</dbReference>
<dbReference type="Pfam" id="PF00507">
    <property type="entry name" value="Oxidored_q4"/>
    <property type="match status" value="1"/>
</dbReference>
<sequence length="120" mass="13805">MFLLYEYDIFWAFLIISSAIPVLAFLISGVLSPIRKGPEKLSSYESGIEPIGDAWLQFRIRYYMFALVFVVFDVETVFLYPWAMSFDVLGVSAFIEALIFVLILILGLVYAWRKGALEWS</sequence>
<feature type="chain" id="PRO_0000362861" description="NAD(P)H-quinone oxidoreductase subunit 3, chloroplastic">
    <location>
        <begin position="1"/>
        <end position="120"/>
    </location>
</feature>
<feature type="transmembrane region" description="Helical" evidence="1">
    <location>
        <begin position="9"/>
        <end position="29"/>
    </location>
</feature>
<feature type="transmembrane region" description="Helical" evidence="1">
    <location>
        <begin position="64"/>
        <end position="84"/>
    </location>
</feature>
<feature type="transmembrane region" description="Helical" evidence="1">
    <location>
        <begin position="88"/>
        <end position="108"/>
    </location>
</feature>
<accession>A4QJT8</accession>
<organism>
    <name type="scientific">Olimarabidopsis pumila</name>
    <name type="common">Dwarf rocket</name>
    <name type="synonym">Arabidopsis griffithiana</name>
    <dbReference type="NCBI Taxonomy" id="74718"/>
    <lineage>
        <taxon>Eukaryota</taxon>
        <taxon>Viridiplantae</taxon>
        <taxon>Streptophyta</taxon>
        <taxon>Embryophyta</taxon>
        <taxon>Tracheophyta</taxon>
        <taxon>Spermatophyta</taxon>
        <taxon>Magnoliopsida</taxon>
        <taxon>eudicotyledons</taxon>
        <taxon>Gunneridae</taxon>
        <taxon>Pentapetalae</taxon>
        <taxon>rosids</taxon>
        <taxon>malvids</taxon>
        <taxon>Brassicales</taxon>
        <taxon>Brassicaceae</taxon>
        <taxon>Alyssopsideae</taxon>
        <taxon>Olimarabidopsis</taxon>
    </lineage>
</organism>
<reference key="1">
    <citation type="submission" date="2007-03" db="EMBL/GenBank/DDBJ databases">
        <title>Sequence analysis of Arabidopsis pumila JS2 chloroplast DNA.</title>
        <authorList>
            <person name="Hosouchi T."/>
            <person name="Tsuruoka H."/>
            <person name="Kotani H."/>
        </authorList>
    </citation>
    <scope>NUCLEOTIDE SEQUENCE [LARGE SCALE GENOMIC DNA]</scope>
</reference>
<comment type="function">
    <text evidence="1">NDH shuttles electrons from NAD(P)H:plastoquinone, via FMN and iron-sulfur (Fe-S) centers, to quinones in the photosynthetic chain and possibly in a chloroplast respiratory chain. The immediate electron acceptor for the enzyme in this species is believed to be plastoquinone. Couples the redox reaction to proton translocation, and thus conserves the redox energy in a proton gradient.</text>
</comment>
<comment type="catalytic activity">
    <reaction evidence="1">
        <text>a plastoquinone + NADH + (n+1) H(+)(in) = a plastoquinol + NAD(+) + n H(+)(out)</text>
        <dbReference type="Rhea" id="RHEA:42608"/>
        <dbReference type="Rhea" id="RHEA-COMP:9561"/>
        <dbReference type="Rhea" id="RHEA-COMP:9562"/>
        <dbReference type="ChEBI" id="CHEBI:15378"/>
        <dbReference type="ChEBI" id="CHEBI:17757"/>
        <dbReference type="ChEBI" id="CHEBI:57540"/>
        <dbReference type="ChEBI" id="CHEBI:57945"/>
        <dbReference type="ChEBI" id="CHEBI:62192"/>
    </reaction>
</comment>
<comment type="catalytic activity">
    <reaction evidence="1">
        <text>a plastoquinone + NADPH + (n+1) H(+)(in) = a plastoquinol + NADP(+) + n H(+)(out)</text>
        <dbReference type="Rhea" id="RHEA:42612"/>
        <dbReference type="Rhea" id="RHEA-COMP:9561"/>
        <dbReference type="Rhea" id="RHEA-COMP:9562"/>
        <dbReference type="ChEBI" id="CHEBI:15378"/>
        <dbReference type="ChEBI" id="CHEBI:17757"/>
        <dbReference type="ChEBI" id="CHEBI:57783"/>
        <dbReference type="ChEBI" id="CHEBI:58349"/>
        <dbReference type="ChEBI" id="CHEBI:62192"/>
    </reaction>
</comment>
<comment type="subunit">
    <text evidence="1">NDH is composed of at least 16 different subunits, 5 of which are encoded in the nucleus.</text>
</comment>
<comment type="subcellular location">
    <subcellularLocation>
        <location evidence="1">Plastid</location>
        <location evidence="1">Chloroplast thylakoid membrane</location>
        <topology evidence="1">Multi-pass membrane protein</topology>
    </subcellularLocation>
</comment>
<comment type="similarity">
    <text evidence="1">Belongs to the complex I subunit 3 family.</text>
</comment>
<geneLocation type="chloroplast"/>
<gene>
    <name evidence="1" type="primary">ndhC</name>
</gene>
<proteinExistence type="inferred from homology"/>
<name>NU3C_OLIPU</name>
<evidence type="ECO:0000255" key="1">
    <source>
        <dbReference type="HAMAP-Rule" id="MF_01394"/>
    </source>
</evidence>